<comment type="subcellular location">
    <subcellularLocation>
        <location evidence="1">Cell membrane</location>
        <topology evidence="1">Multi-pass membrane protein</topology>
    </subcellularLocation>
</comment>
<comment type="similarity">
    <text evidence="1">Belongs to the AAE transporter (TC 2.A.81) family. YbjL subfamily.</text>
</comment>
<evidence type="ECO:0000255" key="1">
    <source>
        <dbReference type="HAMAP-Rule" id="MF_01015"/>
    </source>
</evidence>
<organism>
    <name type="scientific">Escherichia coli O1:K1 / APEC</name>
    <dbReference type="NCBI Taxonomy" id="405955"/>
    <lineage>
        <taxon>Bacteria</taxon>
        <taxon>Pseudomonadati</taxon>
        <taxon>Pseudomonadota</taxon>
        <taxon>Gammaproteobacteria</taxon>
        <taxon>Enterobacterales</taxon>
        <taxon>Enterobacteriaceae</taxon>
        <taxon>Escherichia</taxon>
    </lineage>
</organism>
<accession>A1A986</accession>
<protein>
    <recommendedName>
        <fullName evidence="1">Putative transport protein YbjL</fullName>
    </recommendedName>
</protein>
<reference key="1">
    <citation type="journal article" date="2007" name="J. Bacteriol.">
        <title>The genome sequence of avian pathogenic Escherichia coli strain O1:K1:H7 shares strong similarities with human extraintestinal pathogenic E. coli genomes.</title>
        <authorList>
            <person name="Johnson T.J."/>
            <person name="Kariyawasam S."/>
            <person name="Wannemuehler Y."/>
            <person name="Mangiamele P."/>
            <person name="Johnson S.J."/>
            <person name="Doetkott C."/>
            <person name="Skyberg J.A."/>
            <person name="Lynne A.M."/>
            <person name="Johnson J.R."/>
            <person name="Nolan L.K."/>
        </authorList>
    </citation>
    <scope>NUCLEOTIDE SEQUENCE [LARGE SCALE GENOMIC DNA]</scope>
</reference>
<feature type="chain" id="PRO_0000329143" description="Putative transport protein YbjL">
    <location>
        <begin position="1"/>
        <end position="561"/>
    </location>
</feature>
<feature type="transmembrane region" description="Helical" evidence="1">
    <location>
        <begin position="8"/>
        <end position="28"/>
    </location>
</feature>
<feature type="transmembrane region" description="Helical" evidence="1">
    <location>
        <begin position="32"/>
        <end position="52"/>
    </location>
</feature>
<feature type="transmembrane region" description="Helical" evidence="1">
    <location>
        <begin position="66"/>
        <end position="86"/>
    </location>
</feature>
<feature type="transmembrane region" description="Helical" evidence="1">
    <location>
        <begin position="94"/>
        <end position="114"/>
    </location>
</feature>
<feature type="transmembrane region" description="Helical" evidence="1">
    <location>
        <begin position="158"/>
        <end position="178"/>
    </location>
</feature>
<feature type="transmembrane region" description="Helical" evidence="1">
    <location>
        <begin position="383"/>
        <end position="403"/>
    </location>
</feature>
<feature type="transmembrane region" description="Helical" evidence="1">
    <location>
        <begin position="406"/>
        <end position="426"/>
    </location>
</feature>
<feature type="transmembrane region" description="Helical" evidence="1">
    <location>
        <begin position="451"/>
        <end position="471"/>
    </location>
</feature>
<feature type="transmembrane region" description="Helical" evidence="1">
    <location>
        <begin position="475"/>
        <end position="495"/>
    </location>
</feature>
<feature type="transmembrane region" description="Helical" evidence="1">
    <location>
        <begin position="540"/>
        <end position="560"/>
    </location>
</feature>
<feature type="domain" description="RCK C-terminal 1" evidence="1">
    <location>
        <begin position="200"/>
        <end position="288"/>
    </location>
</feature>
<feature type="domain" description="RCK C-terminal 2" evidence="1">
    <location>
        <begin position="292"/>
        <end position="373"/>
    </location>
</feature>
<proteinExistence type="inferred from homology"/>
<sequence length="561" mass="60351">MNINVAELLNGNYILLLFVVLALGLCLGKLRLGSIQLGNSIGVLVVSLLLGQQHFSINTDALNLGFMLFIFCVGVEAGPNFFSIFFRDGKNYLMLALVMVGSALVIALGLGKLFGWDIGLTAGMLAGSMTSTPVLVGAGDTLRHSGMESRQLSLALDNLSLGYALTYLIGLVSLIVGARYLPKLQHQDLQTSAQQIARERGLDTDANRKVYLPVIRAYRVGPELVAWTDGKNLRELGIYRQTGCYIERIRRNGILANPDGDAVLQMGDEIALVGYPDAHARLDPSFRNGKEVFDRDLLDMRIVTEEVVVKNHNAVGKRLAQLKLTDHGCFLNRVIRSQIEMPIDDNVVLNKGDVLQVSGDARRVKTIADRIGFISIHSQVTDLLAFCAFFVIGLMIGMITFQFSTFSFGMGNAAGLLFAGIMLGFMRANHPTFGYIPQGALSMVKEFGLMVFMAGVGLSAGSGINNGLGAIGGQMLIAGLIVSLVPVVICFLFGAYVLRMNRALLFGAMMGARTCAPAMEIISDTARSNIPALGYAGTYAIANVLLTLAGTIIVMVWPGLG</sequence>
<name>YBJL_ECOK1</name>
<dbReference type="EMBL" id="CP000468">
    <property type="protein sequence ID" value="ABJ00226.1"/>
    <property type="molecule type" value="Genomic_DNA"/>
</dbReference>
<dbReference type="RefSeq" id="WP_001024876.1">
    <property type="nucleotide sequence ID" value="NZ_CADILS010000017.1"/>
</dbReference>
<dbReference type="SMR" id="A1A986"/>
<dbReference type="KEGG" id="ecv:APECO1_1246"/>
<dbReference type="HOGENOM" id="CLU_035023_2_2_6"/>
<dbReference type="Proteomes" id="UP000008216">
    <property type="component" value="Chromosome"/>
</dbReference>
<dbReference type="GO" id="GO:0005886">
    <property type="term" value="C:plasma membrane"/>
    <property type="evidence" value="ECO:0007669"/>
    <property type="project" value="UniProtKB-SubCell"/>
</dbReference>
<dbReference type="GO" id="GO:0008324">
    <property type="term" value="F:monoatomic cation transmembrane transporter activity"/>
    <property type="evidence" value="ECO:0007669"/>
    <property type="project" value="InterPro"/>
</dbReference>
<dbReference type="GO" id="GO:0006813">
    <property type="term" value="P:potassium ion transport"/>
    <property type="evidence" value="ECO:0007669"/>
    <property type="project" value="InterPro"/>
</dbReference>
<dbReference type="FunFam" id="3.30.70.1450:FF:000003">
    <property type="entry name" value="Putative transport protein YbjL"/>
    <property type="match status" value="1"/>
</dbReference>
<dbReference type="Gene3D" id="3.30.70.1450">
    <property type="entry name" value="Regulator of K+ conductance, C-terminal domain"/>
    <property type="match status" value="2"/>
</dbReference>
<dbReference type="HAMAP" id="MF_01015">
    <property type="entry name" value="YbjL"/>
    <property type="match status" value="1"/>
</dbReference>
<dbReference type="InterPro" id="IPR050144">
    <property type="entry name" value="AAE_transporter"/>
</dbReference>
<dbReference type="InterPro" id="IPR006037">
    <property type="entry name" value="RCK_C"/>
</dbReference>
<dbReference type="InterPro" id="IPR036721">
    <property type="entry name" value="RCK_C_sf"/>
</dbReference>
<dbReference type="InterPro" id="IPR023017">
    <property type="entry name" value="Transp_YbjL_put"/>
</dbReference>
<dbReference type="InterPro" id="IPR006512">
    <property type="entry name" value="YidE_YbjL"/>
</dbReference>
<dbReference type="NCBIfam" id="NF003440">
    <property type="entry name" value="PRK04972.1"/>
    <property type="match status" value="1"/>
</dbReference>
<dbReference type="NCBIfam" id="TIGR01625">
    <property type="entry name" value="YidE_YbjL_dupl"/>
    <property type="match status" value="2"/>
</dbReference>
<dbReference type="PANTHER" id="PTHR30445">
    <property type="entry name" value="K(+)_H(+) ANTIPORTER SUBUNIT KHTT"/>
    <property type="match status" value="1"/>
</dbReference>
<dbReference type="PANTHER" id="PTHR30445:SF10">
    <property type="entry name" value="TRANSPORT PROTEIN YBJL-RELATED"/>
    <property type="match status" value="1"/>
</dbReference>
<dbReference type="Pfam" id="PF06826">
    <property type="entry name" value="Asp-Al_Ex"/>
    <property type="match status" value="2"/>
</dbReference>
<dbReference type="Pfam" id="PF02080">
    <property type="entry name" value="TrkA_C"/>
    <property type="match status" value="2"/>
</dbReference>
<dbReference type="SUPFAM" id="SSF116726">
    <property type="entry name" value="TrkA C-terminal domain-like"/>
    <property type="match status" value="2"/>
</dbReference>
<dbReference type="PROSITE" id="PS51202">
    <property type="entry name" value="RCK_C"/>
    <property type="match status" value="2"/>
</dbReference>
<gene>
    <name evidence="1" type="primary">ybjL</name>
    <name type="ordered locus">Ecok1_07320</name>
    <name type="ORF">APECO1_1246</name>
</gene>
<keyword id="KW-1003">Cell membrane</keyword>
<keyword id="KW-0472">Membrane</keyword>
<keyword id="KW-1185">Reference proteome</keyword>
<keyword id="KW-0677">Repeat</keyword>
<keyword id="KW-0812">Transmembrane</keyword>
<keyword id="KW-1133">Transmembrane helix</keyword>
<keyword id="KW-0813">Transport</keyword>